<evidence type="ECO:0000255" key="1">
    <source>
        <dbReference type="HAMAP-Rule" id="MF_01012"/>
    </source>
</evidence>
<keyword id="KW-0004">4Fe-4S</keyword>
<keyword id="KW-0408">Iron</keyword>
<keyword id="KW-0411">Iron-sulfur</keyword>
<keyword id="KW-0479">Metal-binding</keyword>
<keyword id="KW-0489">Methyltransferase</keyword>
<keyword id="KW-1185">Reference proteome</keyword>
<keyword id="KW-0698">rRNA processing</keyword>
<keyword id="KW-0949">S-adenosyl-L-methionine</keyword>
<keyword id="KW-0808">Transferase</keyword>
<organism>
    <name type="scientific">Halothiobacillus neapolitanus (strain ATCC 23641 / c2)</name>
    <name type="common">Thiobacillus neapolitanus</name>
    <dbReference type="NCBI Taxonomy" id="555778"/>
    <lineage>
        <taxon>Bacteria</taxon>
        <taxon>Pseudomonadati</taxon>
        <taxon>Pseudomonadota</taxon>
        <taxon>Gammaproteobacteria</taxon>
        <taxon>Chromatiales</taxon>
        <taxon>Halothiobacillaceae</taxon>
        <taxon>Halothiobacillus</taxon>
    </lineage>
</organism>
<gene>
    <name evidence="1" type="primary">rlmC</name>
    <name type="ordered locus">Hneap_1713</name>
</gene>
<reference key="1">
    <citation type="submission" date="2009-10" db="EMBL/GenBank/DDBJ databases">
        <title>Complete sequence of Halothiobacillus neapolitanus c2.</title>
        <authorList>
            <consortium name="US DOE Joint Genome Institute"/>
            <person name="Lucas S."/>
            <person name="Copeland A."/>
            <person name="Lapidus A."/>
            <person name="Glavina del Rio T."/>
            <person name="Tice H."/>
            <person name="Bruce D."/>
            <person name="Goodwin L."/>
            <person name="Pitluck S."/>
            <person name="Davenport K."/>
            <person name="Brettin T."/>
            <person name="Detter J.C."/>
            <person name="Han C."/>
            <person name="Tapia R."/>
            <person name="Larimer F."/>
            <person name="Land M."/>
            <person name="Hauser L."/>
            <person name="Kyrpides N."/>
            <person name="Mikhailova N."/>
            <person name="Kerfeld C."/>
            <person name="Cannon G."/>
            <person name="Heinhort S."/>
        </authorList>
    </citation>
    <scope>NUCLEOTIDE SEQUENCE [LARGE SCALE GENOMIC DNA]</scope>
    <source>
        <strain>ATCC 23641 / c2</strain>
    </source>
</reference>
<accession>D0L1G3</accession>
<dbReference type="EC" id="2.1.1.189" evidence="1"/>
<dbReference type="EMBL" id="CP001801">
    <property type="protein sequence ID" value="ACX96536.1"/>
    <property type="molecule type" value="Genomic_DNA"/>
</dbReference>
<dbReference type="RefSeq" id="WP_012824569.1">
    <property type="nucleotide sequence ID" value="NC_013422.1"/>
</dbReference>
<dbReference type="SMR" id="D0L1G3"/>
<dbReference type="STRING" id="555778.Hneap_1713"/>
<dbReference type="KEGG" id="hna:Hneap_1713"/>
<dbReference type="eggNOG" id="COG2265">
    <property type="taxonomic scope" value="Bacteria"/>
</dbReference>
<dbReference type="HOGENOM" id="CLU_014689_0_0_6"/>
<dbReference type="OrthoDB" id="9804590at2"/>
<dbReference type="Proteomes" id="UP000009102">
    <property type="component" value="Chromosome"/>
</dbReference>
<dbReference type="GO" id="GO:0051539">
    <property type="term" value="F:4 iron, 4 sulfur cluster binding"/>
    <property type="evidence" value="ECO:0007669"/>
    <property type="project" value="UniProtKB-KW"/>
</dbReference>
<dbReference type="GO" id="GO:0005506">
    <property type="term" value="F:iron ion binding"/>
    <property type="evidence" value="ECO:0007669"/>
    <property type="project" value="UniProtKB-UniRule"/>
</dbReference>
<dbReference type="GO" id="GO:0070041">
    <property type="term" value="F:rRNA (uridine-C5-)-methyltransferase activity"/>
    <property type="evidence" value="ECO:0007669"/>
    <property type="project" value="UniProtKB-UniRule"/>
</dbReference>
<dbReference type="GO" id="GO:0070475">
    <property type="term" value="P:rRNA base methylation"/>
    <property type="evidence" value="ECO:0007669"/>
    <property type="project" value="TreeGrafter"/>
</dbReference>
<dbReference type="CDD" id="cd02440">
    <property type="entry name" value="AdoMet_MTases"/>
    <property type="match status" value="1"/>
</dbReference>
<dbReference type="Gene3D" id="2.40.50.1070">
    <property type="match status" value="1"/>
</dbReference>
<dbReference type="Gene3D" id="3.40.50.150">
    <property type="entry name" value="Vaccinia Virus protein VP39"/>
    <property type="match status" value="1"/>
</dbReference>
<dbReference type="HAMAP" id="MF_01012">
    <property type="entry name" value="23SrRNA_methyltr_RlmC"/>
    <property type="match status" value="1"/>
</dbReference>
<dbReference type="InterPro" id="IPR011825">
    <property type="entry name" value="23SrRNA_MeTrfase_RlmC"/>
</dbReference>
<dbReference type="InterPro" id="IPR030390">
    <property type="entry name" value="MeTrfase_TrmA_AS"/>
</dbReference>
<dbReference type="InterPro" id="IPR029063">
    <property type="entry name" value="SAM-dependent_MTases_sf"/>
</dbReference>
<dbReference type="InterPro" id="IPR010280">
    <property type="entry name" value="U5_MeTrfase_fam"/>
</dbReference>
<dbReference type="NCBIfam" id="TIGR02085">
    <property type="entry name" value="meth_trns_rumB"/>
    <property type="match status" value="1"/>
</dbReference>
<dbReference type="NCBIfam" id="NF002910">
    <property type="entry name" value="PRK03522.2-3"/>
    <property type="match status" value="1"/>
</dbReference>
<dbReference type="PANTHER" id="PTHR11061">
    <property type="entry name" value="RNA M5U METHYLTRANSFERASE"/>
    <property type="match status" value="1"/>
</dbReference>
<dbReference type="PANTHER" id="PTHR11061:SF30">
    <property type="entry name" value="TRNA (URACIL(54)-C(5))-METHYLTRANSFERASE"/>
    <property type="match status" value="1"/>
</dbReference>
<dbReference type="Pfam" id="PF05958">
    <property type="entry name" value="tRNA_U5-meth_tr"/>
    <property type="match status" value="1"/>
</dbReference>
<dbReference type="SUPFAM" id="SSF53335">
    <property type="entry name" value="S-adenosyl-L-methionine-dependent methyltransferases"/>
    <property type="match status" value="1"/>
</dbReference>
<dbReference type="PROSITE" id="PS51687">
    <property type="entry name" value="SAM_MT_RNA_M5U"/>
    <property type="match status" value="1"/>
</dbReference>
<dbReference type="PROSITE" id="PS01230">
    <property type="entry name" value="TRMA_1"/>
    <property type="match status" value="1"/>
</dbReference>
<sequence length="379" mass="41605">MHCAYFERGTCRSCGWLADPYADQLQRKMARCQSALTGLGGVWLPIVPSAETAFRNKAKMVVCGDASSPCLGILDADDDGIDLSNCPLYPTAITEAFEPLKQMIRRLGIPPYDVKKRQGELKYLLITVSEDDDSLMVRLVLRSDIWIERLRADLSTLTADLPHLAVLSVNIQPVHQAILEGEQEVILTDRETLTVHLNGLPFHLRPKSFFQTNTRVAEQLYATARSWVAEVAPVHMWDLFCGVGGFALHCADVIPGQVTGIEISAEAIASAQQSALELGLKNVSFHALGANEFIDQAVSLPQMPALVVVNPPRRGLGVGLCAFLDESVVQTVIYSSCNPESLARDLVMMPGFELVKAQVFDLFPHTAHSEVLAMLVRVR</sequence>
<protein>
    <recommendedName>
        <fullName evidence="1">23S rRNA (uracil(747)-C(5))-methyltransferase RlmC</fullName>
        <ecNumber evidence="1">2.1.1.189</ecNumber>
    </recommendedName>
    <alternativeName>
        <fullName evidence="1">23S rRNA(m5U747)-methyltransferase</fullName>
    </alternativeName>
</protein>
<comment type="function">
    <text evidence="1">Catalyzes the formation of 5-methyl-uridine at position 747 (m5U747) in 23S rRNA.</text>
</comment>
<comment type="catalytic activity">
    <reaction evidence="1">
        <text>uridine(747) in 23S rRNA + S-adenosyl-L-methionine = 5-methyluridine(747) in 23S rRNA + S-adenosyl-L-homocysteine + H(+)</text>
        <dbReference type="Rhea" id="RHEA:42628"/>
        <dbReference type="Rhea" id="RHEA-COMP:10154"/>
        <dbReference type="Rhea" id="RHEA-COMP:10155"/>
        <dbReference type="ChEBI" id="CHEBI:15378"/>
        <dbReference type="ChEBI" id="CHEBI:57856"/>
        <dbReference type="ChEBI" id="CHEBI:59789"/>
        <dbReference type="ChEBI" id="CHEBI:65315"/>
        <dbReference type="ChEBI" id="CHEBI:74447"/>
        <dbReference type="EC" id="2.1.1.189"/>
    </reaction>
</comment>
<comment type="similarity">
    <text evidence="1">Belongs to the class I-like SAM-binding methyltransferase superfamily. RNA M5U methyltransferase family. RlmC subfamily.</text>
</comment>
<feature type="chain" id="PRO_0000414820" description="23S rRNA (uracil(747)-C(5))-methyltransferase RlmC">
    <location>
        <begin position="1"/>
        <end position="379"/>
    </location>
</feature>
<feature type="active site" description="Nucleophile" evidence="1">
    <location>
        <position position="337"/>
    </location>
</feature>
<feature type="binding site" evidence="1">
    <location>
        <position position="3"/>
    </location>
    <ligand>
        <name>[4Fe-4S] cluster</name>
        <dbReference type="ChEBI" id="CHEBI:49883"/>
    </ligand>
</feature>
<feature type="binding site" evidence="1">
    <location>
        <position position="11"/>
    </location>
    <ligand>
        <name>[4Fe-4S] cluster</name>
        <dbReference type="ChEBI" id="CHEBI:49883"/>
    </ligand>
</feature>
<feature type="binding site" evidence="1">
    <location>
        <position position="14"/>
    </location>
    <ligand>
        <name>[4Fe-4S] cluster</name>
        <dbReference type="ChEBI" id="CHEBI:49883"/>
    </ligand>
</feature>
<feature type="binding site" evidence="1">
    <location>
        <position position="86"/>
    </location>
    <ligand>
        <name>[4Fe-4S] cluster</name>
        <dbReference type="ChEBI" id="CHEBI:49883"/>
    </ligand>
</feature>
<feature type="binding site" evidence="1">
    <location>
        <position position="211"/>
    </location>
    <ligand>
        <name>S-adenosyl-L-methionine</name>
        <dbReference type="ChEBI" id="CHEBI:59789"/>
    </ligand>
</feature>
<feature type="binding site" evidence="1">
    <location>
        <position position="240"/>
    </location>
    <ligand>
        <name>S-adenosyl-L-methionine</name>
        <dbReference type="ChEBI" id="CHEBI:59789"/>
    </ligand>
</feature>
<feature type="binding site" evidence="1">
    <location>
        <position position="262"/>
    </location>
    <ligand>
        <name>S-adenosyl-L-methionine</name>
        <dbReference type="ChEBI" id="CHEBI:59789"/>
    </ligand>
</feature>
<feature type="binding site" evidence="1">
    <location>
        <position position="310"/>
    </location>
    <ligand>
        <name>S-adenosyl-L-methionine</name>
        <dbReference type="ChEBI" id="CHEBI:59789"/>
    </ligand>
</feature>
<proteinExistence type="inferred from homology"/>
<name>RLMC_HALNC</name>